<reference key="1">
    <citation type="journal article" date="1992" name="Plant Mol. Biol.">
        <title>Coordinated regulation of two indole alkaloid biosynthetic genes from Catharanthus roseus by auxin and elicitors.</title>
        <authorList>
            <person name="Pasquali G."/>
            <person name="Goddijn O.J.M."/>
            <person name="de Waal A."/>
            <person name="Verpoorte R."/>
            <person name="Schilperoort R.A."/>
            <person name="Hoge J.H.C."/>
            <person name="Memelink J."/>
        </authorList>
    </citation>
    <scope>NUCLEOTIDE SEQUENCE [MRNA]</scope>
    <scope>PROTEIN SEQUENCE OF 32-52</scope>
    <source>
        <strain>cv. G. Don</strain>
    </source>
</reference>
<reference key="2">
    <citation type="submission" date="1996-12" db="EMBL/GenBank/DDBJ databases">
        <authorList>
            <person name="Pasquali G."/>
            <person name="Erven A."/>
            <person name="Menke F."/>
            <person name="Memelink J."/>
        </authorList>
    </citation>
    <scope>NUCLEOTIDE SEQUENCE</scope>
    <source>
        <strain>cv. Morning mist</strain>
    </source>
</reference>
<reference key="3">
    <citation type="journal article" date="1990" name="Nucleic Acids Res.">
        <title>Nucleotide sequence of a cDNA encoding the vacuolar protein strictosidine synthase from Catharanthus roseus.</title>
        <authorList>
            <person name="McKnight T.D."/>
            <person name="Roessner C.A."/>
            <person name="Devagupta R."/>
            <person name="Scott A.I."/>
            <person name="Nessler C.L."/>
        </authorList>
    </citation>
    <scope>NUCLEOTIDE SEQUENCE [MRNA] OF 10-352</scope>
</reference>
<comment type="function">
    <text>Catalyzes the stereospecific condensation of tryptamine with secologanin to form strictosidine, the key intermediate of indole alkaloid biosynthesis.</text>
</comment>
<comment type="catalytic activity">
    <reaction>
        <text>3alpha(S)-strictosidine + H2O = secologanin + tryptamine</text>
        <dbReference type="Rhea" id="RHEA:15013"/>
        <dbReference type="ChEBI" id="CHEBI:15377"/>
        <dbReference type="ChEBI" id="CHEBI:18002"/>
        <dbReference type="ChEBI" id="CHEBI:57887"/>
        <dbReference type="ChEBI" id="CHEBI:58193"/>
        <dbReference type="EC" id="3.5.99.13"/>
    </reaction>
</comment>
<comment type="pathway">
    <text>Alkaloid biosynthesis; 3alpha(S)-strictosidine biosynthesis; 3alpha(S)-strictosidine from secologanin and tryptamine: step 1/1.</text>
</comment>
<comment type="subunit">
    <text>Monomer.</text>
</comment>
<comment type="subcellular location">
    <subcellularLocation>
        <location>Vacuole</location>
    </subcellularLocation>
</comment>
<comment type="similarity">
    <text evidence="3">Belongs to the strictosidine synthase family.</text>
</comment>
<keyword id="KW-0002">3D-structure</keyword>
<keyword id="KW-0017">Alkaloid metabolism</keyword>
<keyword id="KW-0903">Direct protein sequencing</keyword>
<keyword id="KW-0325">Glycoprotein</keyword>
<keyword id="KW-0378">Hydrolase</keyword>
<keyword id="KW-0732">Signal</keyword>
<keyword id="KW-0926">Vacuole</keyword>
<proteinExistence type="evidence at protein level"/>
<organism>
    <name type="scientific">Catharanthus roseus</name>
    <name type="common">Madagascar periwinkle</name>
    <name type="synonym">Vinca rosea</name>
    <dbReference type="NCBI Taxonomy" id="4058"/>
    <lineage>
        <taxon>Eukaryota</taxon>
        <taxon>Viridiplantae</taxon>
        <taxon>Streptophyta</taxon>
        <taxon>Embryophyta</taxon>
        <taxon>Tracheophyta</taxon>
        <taxon>Spermatophyta</taxon>
        <taxon>Magnoliopsida</taxon>
        <taxon>eudicotyledons</taxon>
        <taxon>Gunneridae</taxon>
        <taxon>Pentapetalae</taxon>
        <taxon>asterids</taxon>
        <taxon>lamiids</taxon>
        <taxon>Gentianales</taxon>
        <taxon>Apocynaceae</taxon>
        <taxon>Rauvolfioideae</taxon>
        <taxon>Vinceae</taxon>
        <taxon>Catharanthinae</taxon>
        <taxon>Catharanthus</taxon>
    </lineage>
</organism>
<evidence type="ECO:0000255" key="1"/>
<evidence type="ECO:0000269" key="2">
    <source>
    </source>
</evidence>
<evidence type="ECO:0000305" key="3"/>
<evidence type="ECO:0007829" key="4">
    <source>
        <dbReference type="PDB" id="6ZEA"/>
    </source>
</evidence>
<name>STSY_CATRO</name>
<gene>
    <name type="primary">STR1</name>
    <name type="synonym">SSS</name>
</gene>
<accession>P18417</accession>
<protein>
    <recommendedName>
        <fullName>Strictosidine synthase</fullName>
        <ecNumber>3.5.99.13</ecNumber>
    </recommendedName>
</protein>
<dbReference type="EC" id="3.5.99.13"/>
<dbReference type="EMBL" id="X61932">
    <property type="protein sequence ID" value="CAA43936.1"/>
    <property type="molecule type" value="mRNA"/>
</dbReference>
<dbReference type="EMBL" id="Y10182">
    <property type="protein sequence ID" value="CAA71255.1"/>
    <property type="molecule type" value="Genomic_DNA"/>
</dbReference>
<dbReference type="EMBL" id="X53602">
    <property type="protein sequence ID" value="CAA37671.1"/>
    <property type="molecule type" value="mRNA"/>
</dbReference>
<dbReference type="PIR" id="S22464">
    <property type="entry name" value="S22464"/>
</dbReference>
<dbReference type="PDB" id="6ZEA">
    <property type="method" value="X-ray"/>
    <property type="resolution" value="1.54 A"/>
    <property type="chains" value="A=32-352"/>
</dbReference>
<dbReference type="PDBsum" id="6ZEA"/>
<dbReference type="SMR" id="P18417"/>
<dbReference type="ChEMBL" id="CHEMBL4369"/>
<dbReference type="GlyCosmos" id="P18417">
    <property type="glycosylation" value="2 sites, No reported glycans"/>
</dbReference>
<dbReference type="KEGG" id="ag:CAA37671"/>
<dbReference type="OrthoDB" id="5307922at2759"/>
<dbReference type="BioCyc" id="MetaCyc:MONOMER-11582"/>
<dbReference type="BRENDA" id="4.3.3.2">
    <property type="organism ID" value="1211"/>
</dbReference>
<dbReference type="UniPathway" id="UPA00311">
    <property type="reaction ID" value="UER00447"/>
</dbReference>
<dbReference type="GO" id="GO:0012505">
    <property type="term" value="C:endomembrane system"/>
    <property type="evidence" value="ECO:0007669"/>
    <property type="project" value="TreeGrafter"/>
</dbReference>
<dbReference type="GO" id="GO:0005773">
    <property type="term" value="C:vacuole"/>
    <property type="evidence" value="ECO:0007669"/>
    <property type="project" value="UniProtKB-SubCell"/>
</dbReference>
<dbReference type="GO" id="GO:0016844">
    <property type="term" value="F:strictosidine synthase activity"/>
    <property type="evidence" value="ECO:0007669"/>
    <property type="project" value="RHEA"/>
</dbReference>
<dbReference type="GO" id="GO:0009820">
    <property type="term" value="P:alkaloid metabolic process"/>
    <property type="evidence" value="ECO:0007669"/>
    <property type="project" value="UniProtKB-KW"/>
</dbReference>
<dbReference type="Gene3D" id="2.120.10.30">
    <property type="entry name" value="TolB, C-terminal domain"/>
    <property type="match status" value="1"/>
</dbReference>
<dbReference type="InterPro" id="IPR011042">
    <property type="entry name" value="6-blade_b-propeller_TolB-like"/>
</dbReference>
<dbReference type="InterPro" id="IPR018119">
    <property type="entry name" value="Strictosidine_synth_cons-reg"/>
</dbReference>
<dbReference type="PANTHER" id="PTHR10426:SF136">
    <property type="entry name" value="PROTEIN STRICTOSIDINE SYNTHASE-LIKE 9-LIKE"/>
    <property type="match status" value="1"/>
</dbReference>
<dbReference type="PANTHER" id="PTHR10426">
    <property type="entry name" value="STRICTOSIDINE SYNTHASE-RELATED"/>
    <property type="match status" value="1"/>
</dbReference>
<dbReference type="Pfam" id="PF03088">
    <property type="entry name" value="Str_synth"/>
    <property type="match status" value="1"/>
</dbReference>
<dbReference type="SUPFAM" id="SSF63829">
    <property type="entry name" value="Calcium-dependent phosphotriesterase"/>
    <property type="match status" value="1"/>
</dbReference>
<feature type="signal peptide" evidence="2">
    <location>
        <begin position="1"/>
        <end position="31"/>
    </location>
</feature>
<feature type="chain" id="PRO_0000033332" description="Strictosidine synthase">
    <location>
        <begin position="32"/>
        <end position="352"/>
    </location>
</feature>
<feature type="glycosylation site" description="N-linked (GlcNAc...) asparagine" evidence="1">
    <location>
        <position position="95"/>
    </location>
</feature>
<feature type="glycosylation site" description="N-linked (GlcNAc...) asparagine" evidence="1">
    <location>
        <position position="187"/>
    </location>
</feature>
<feature type="sequence conflict" description="In Ref. 3; CAA37671." evidence="3" ref="3">
    <original>R</original>
    <variation>S</variation>
    <location>
        <position position="285"/>
    </location>
</feature>
<feature type="sequence conflict" description="In Ref. 3; CAA37671." evidence="3" ref="3">
    <original>F</original>
    <variation>S</variation>
    <location>
        <position position="330"/>
    </location>
</feature>
<feature type="sequence conflict" description="In Ref. 3; CAA37671." evidence="3" ref="3">
    <original>S</original>
    <variation>QLVIN</variation>
    <location>
        <position position="352"/>
    </location>
</feature>
<feature type="strand" evidence="4">
    <location>
        <begin position="36"/>
        <end position="41"/>
    </location>
</feature>
<feature type="strand" evidence="4">
    <location>
        <begin position="43"/>
        <end position="45"/>
    </location>
</feature>
<feature type="strand" evidence="4">
    <location>
        <begin position="57"/>
        <end position="62"/>
    </location>
</feature>
<feature type="strand" evidence="4">
    <location>
        <begin position="66"/>
        <end position="71"/>
    </location>
</feature>
<feature type="strand" evidence="4">
    <location>
        <begin position="78"/>
        <end position="85"/>
    </location>
</feature>
<feature type="helix" evidence="4">
    <location>
        <begin position="90"/>
        <end position="93"/>
    </location>
</feature>
<feature type="helix" evidence="4">
    <location>
        <begin position="99"/>
        <end position="101"/>
    </location>
</feature>
<feature type="helix" evidence="4">
    <location>
        <begin position="102"/>
        <end position="105"/>
    </location>
</feature>
<feature type="strand" evidence="4">
    <location>
        <begin position="108"/>
        <end position="114"/>
    </location>
</feature>
<feature type="turn" evidence="4">
    <location>
        <begin position="115"/>
        <end position="118"/>
    </location>
</feature>
<feature type="strand" evidence="4">
    <location>
        <begin position="119"/>
        <end position="124"/>
    </location>
</feature>
<feature type="turn" evidence="4">
    <location>
        <begin position="125"/>
        <end position="127"/>
    </location>
</feature>
<feature type="strand" evidence="4">
    <location>
        <begin position="128"/>
        <end position="133"/>
    </location>
</feature>
<feature type="strand" evidence="4">
    <location>
        <begin position="140"/>
        <end position="146"/>
    </location>
</feature>
<feature type="strand" evidence="4">
    <location>
        <begin position="154"/>
        <end position="159"/>
    </location>
</feature>
<feature type="turn" evidence="4">
    <location>
        <begin position="161"/>
        <end position="163"/>
    </location>
</feature>
<feature type="strand" evidence="4">
    <location>
        <begin position="166"/>
        <end position="171"/>
    </location>
</feature>
<feature type="helix" evidence="4">
    <location>
        <begin position="179"/>
        <end position="188"/>
    </location>
</feature>
<feature type="strand" evidence="4">
    <location>
        <begin position="193"/>
        <end position="199"/>
    </location>
</feature>
<feature type="turn" evidence="4">
    <location>
        <begin position="200"/>
        <end position="203"/>
    </location>
</feature>
<feature type="strand" evidence="4">
    <location>
        <begin position="204"/>
        <end position="213"/>
    </location>
</feature>
<feature type="strand" evidence="4">
    <location>
        <begin position="217"/>
        <end position="220"/>
    </location>
</feature>
<feature type="strand" evidence="4">
    <location>
        <begin position="224"/>
        <end position="231"/>
    </location>
</feature>
<feature type="helix" evidence="4">
    <location>
        <begin position="232"/>
        <end position="234"/>
    </location>
</feature>
<feature type="strand" evidence="4">
    <location>
        <begin position="236"/>
        <end position="244"/>
    </location>
</feature>
<feature type="turn" evidence="4">
    <location>
        <begin position="245"/>
        <end position="248"/>
    </location>
</feature>
<feature type="strand" evidence="4">
    <location>
        <begin position="250"/>
        <end position="255"/>
    </location>
</feature>
<feature type="strand" evidence="4">
    <location>
        <begin position="262"/>
        <end position="264"/>
    </location>
</feature>
<feature type="strand" evidence="4">
    <location>
        <begin position="270"/>
        <end position="277"/>
    </location>
</feature>
<feature type="strand" evidence="4">
    <location>
        <begin position="286"/>
        <end position="293"/>
    </location>
</feature>
<feature type="strand" evidence="4">
    <location>
        <begin position="299"/>
        <end position="304"/>
    </location>
</feature>
<feature type="turn" evidence="4">
    <location>
        <begin position="307"/>
        <end position="311"/>
    </location>
</feature>
<feature type="strand" evidence="4">
    <location>
        <begin position="316"/>
        <end position="320"/>
    </location>
</feature>
<feature type="strand" evidence="4">
    <location>
        <begin position="323"/>
        <end position="327"/>
    </location>
</feature>
<feature type="strand" evidence="4">
    <location>
        <begin position="332"/>
        <end position="338"/>
    </location>
</feature>
<sequence length="352" mass="39094">MANFSESKSMMAVFFMFFLLLLSSSSSSSSSSPILKKIFIESPSYAPNAFTFDSTDKGFYTSVQDGRVIKYEGPNSGFTDFAYASPFWNKAFCENSTDPEKRPLCGRTYDISYDYKNSQMYIVDGHYHLCVVGKEGGYATQLATSVQGVPFKWLYAVTVDQRTGIVYFTDVSSIHDDSPEGVEEIMNTSDRTGRLMKYDPSTKETTLLLKELHVPGGAEISADGSFVVVAEFLSNRIVKYWLEGPKKGSAEFLVTIPNPGNIKRNSDGHFWVSSSEELDGGQHGRVVSRGIKFDGFGNILQVIPLPPPYEGEHFEQIQEHDGLLYIGSLFHSSVGILVYDDHDNKGNSYVSS</sequence>